<feature type="chain" id="PRO_0000085302" description="Protein Rev">
    <location>
        <begin position="1"/>
        <end position="100"/>
    </location>
</feature>
<feature type="region of interest" description="Homomultimerization" evidence="1">
    <location>
        <begin position="14"/>
        <end position="22"/>
    </location>
</feature>
<feature type="region of interest" description="Disordered" evidence="2">
    <location>
        <begin position="18"/>
        <end position="39"/>
    </location>
</feature>
<feature type="region of interest" description="Disordered" evidence="2">
    <location>
        <begin position="80"/>
        <end position="100"/>
    </location>
</feature>
<feature type="short sequence motif" description="Nuclear localization signal and RNA-binding (RRE)" evidence="1">
    <location>
        <begin position="30"/>
        <end position="46"/>
    </location>
</feature>
<feature type="short sequence motif" description="Nuclear export signal" evidence="1">
    <location>
        <begin position="67"/>
        <end position="79"/>
    </location>
</feature>
<gene>
    <name type="primary">rev</name>
</gene>
<sequence>MSSNEEELRRRLRLIHLLHQTNPYPDGPGTANQRRRRRRRWRQRWQQILALADRIYSFPDPPVDTPLDLAIQQLQRLAIEELPNPPASAPEPLKDAAESP</sequence>
<dbReference type="EMBL" id="L03298">
    <property type="protein sequence ID" value="AAA47776.1"/>
    <property type="molecule type" value="Genomic_RNA"/>
</dbReference>
<dbReference type="EMBL" id="M31325">
    <property type="protein sequence ID" value="AAA47751.1"/>
    <property type="molecule type" value="Genomic_RNA"/>
</dbReference>
<dbReference type="SMR" id="P19502"/>
<dbReference type="Proteomes" id="UP000007221">
    <property type="component" value="Segment"/>
</dbReference>
<dbReference type="GO" id="GO:0030430">
    <property type="term" value="C:host cell cytoplasm"/>
    <property type="evidence" value="ECO:0007669"/>
    <property type="project" value="UniProtKB-SubCell"/>
</dbReference>
<dbReference type="GO" id="GO:0044196">
    <property type="term" value="C:host cell nucleolus"/>
    <property type="evidence" value="ECO:0007669"/>
    <property type="project" value="UniProtKB-SubCell"/>
</dbReference>
<dbReference type="GO" id="GO:0003700">
    <property type="term" value="F:DNA-binding transcription factor activity"/>
    <property type="evidence" value="ECO:0007669"/>
    <property type="project" value="InterPro"/>
</dbReference>
<dbReference type="GO" id="GO:0003723">
    <property type="term" value="F:RNA binding"/>
    <property type="evidence" value="ECO:0007669"/>
    <property type="project" value="UniProtKB-KW"/>
</dbReference>
<dbReference type="GO" id="GO:0051028">
    <property type="term" value="P:mRNA transport"/>
    <property type="evidence" value="ECO:0007669"/>
    <property type="project" value="UniProtKB-KW"/>
</dbReference>
<dbReference type="Gene3D" id="6.10.140.630">
    <property type="match status" value="1"/>
</dbReference>
<dbReference type="InterPro" id="IPR000625">
    <property type="entry name" value="REV_protein"/>
</dbReference>
<dbReference type="Pfam" id="PF00424">
    <property type="entry name" value="REV"/>
    <property type="match status" value="1"/>
</dbReference>
<name>REV_SIVSP</name>
<evidence type="ECO:0000250" key="1"/>
<evidence type="ECO:0000256" key="2">
    <source>
        <dbReference type="SAM" id="MobiDB-lite"/>
    </source>
</evidence>
<proteinExistence type="inferred from homology"/>
<reference key="1">
    <citation type="journal article" date="1990" name="Nature">
        <title>Sequence analysis and acute pathogenicity of molecularly cloned SIVSMM-PBj14.</title>
        <authorList>
            <person name="Dewhurst S."/>
            <person name="Embretson J.E."/>
            <person name="Anderson D.C."/>
            <person name="Mullins J.I."/>
            <person name="Fultz P.N."/>
        </authorList>
    </citation>
    <scope>NUCLEOTIDE SEQUENCE [GENOMIC RNA]</scope>
</reference>
<reference key="2">
    <citation type="journal article" date="1992" name="AIDS Res. Hum. Retroviruses">
        <title>Molecular clones from a non-acutely pathogenic derivative of SIVsmmPBj14: characterization and comparison to acutely pathogenic clones.</title>
        <authorList>
            <person name="Dewhurst S."/>
            <person name="Embretson J.E."/>
            <person name="Fultz P.N."/>
            <person name="Mullins J.I."/>
        </authorList>
    </citation>
    <scope>NUCLEOTIDE SEQUENCE [GENOMIC RNA]</scope>
</reference>
<accession>P19502</accession>
<keyword id="KW-1035">Host cytoplasm</keyword>
<keyword id="KW-1048">Host nucleus</keyword>
<keyword id="KW-0509">mRNA transport</keyword>
<keyword id="KW-0694">RNA-binding</keyword>
<keyword id="KW-0813">Transport</keyword>
<organism>
    <name type="scientific">Simian immunodeficiency virus (isolate PBj14/BCL-3)</name>
    <name type="common">SIV-sm</name>
    <name type="synonym">Simian immunodeficiency virus sooty mangabey monkey</name>
    <dbReference type="NCBI Taxonomy" id="11738"/>
    <lineage>
        <taxon>Viruses</taxon>
        <taxon>Riboviria</taxon>
        <taxon>Pararnavirae</taxon>
        <taxon>Artverviricota</taxon>
        <taxon>Revtraviricetes</taxon>
        <taxon>Ortervirales</taxon>
        <taxon>Retroviridae</taxon>
        <taxon>Orthoretrovirinae</taxon>
        <taxon>Lentivirus</taxon>
        <taxon>Simian immunodeficiency virus</taxon>
    </lineage>
</organism>
<protein>
    <recommendedName>
        <fullName>Protein Rev</fullName>
    </recommendedName>
    <alternativeName>
        <fullName>Regulator of expression of viral proteins</fullName>
    </alternativeName>
</protein>
<organismHost>
    <name type="scientific">Cercopithecidae</name>
    <name type="common">Old World monkeys</name>
    <dbReference type="NCBI Taxonomy" id="9527"/>
</organismHost>
<comment type="function">
    <text evidence="1">Escorts unspliced or incompletely spliced viral pre-mRNAs (late transcripts) out of the nucleus of infected cells. These pre-mRNAs carry a recognition sequence called Rev responsive element (RRE) located in the env gene, that is not present in fully spliced viral mRNAs (early transcripts). This function is essential since most viral proteins are translated from unspliced or partially spliced pre-mRNAs which cannot exit the nucleus by the pathway used by fully processed cellular mRNAs (By similarity).</text>
</comment>
<comment type="subunit">
    <text evidence="1">Homomultimer; when bound to the RRE. Multimeric assembly is essential for activity (By similarity).</text>
</comment>
<comment type="subcellular location">
    <subcellularLocation>
        <location>Host nucleus</location>
        <location>Host nucleolus</location>
    </subcellularLocation>
    <subcellularLocation>
        <location>Host cytoplasm</location>
    </subcellularLocation>
    <text evidence="1">The presence of both nuclear import and nuclear export signals leads to continuous shuttling between the nucleus and cytoplasm.</text>
</comment>
<comment type="domain">
    <text evidence="1">The RNA-binding motif binds to the RRE, a stem-and-loop structure present in incompletely spliced viral pre-mRNAs. This region also contains the NLS which mediates nuclear localization. These overlapping functions prevent Rev bound to RRE from undesirable return to the nucleus. When Rev binds the RRE, the NLS becomes masked while the NES remains accessible (By similarity).</text>
</comment>